<feature type="chain" id="PRO_0000050610" description="5-hydroxyisourate hydrolase">
    <location>
        <begin position="1"/>
        <end position="118"/>
    </location>
</feature>
<feature type="binding site" evidence="1">
    <location>
        <position position="7"/>
    </location>
    <ligand>
        <name>substrate</name>
    </ligand>
</feature>
<feature type="binding site" evidence="1">
    <location>
        <position position="46"/>
    </location>
    <ligand>
        <name>substrate</name>
    </ligand>
</feature>
<feature type="binding site" evidence="1">
    <location>
        <position position="115"/>
    </location>
    <ligand>
        <name>substrate</name>
    </ligand>
</feature>
<evidence type="ECO:0000250" key="1"/>
<evidence type="ECO:0000305" key="2"/>
<proteinExistence type="inferred from homology"/>
<reference key="1">
    <citation type="journal article" date="2002" name="Proc. Natl. Acad. Sci. U.S.A.">
        <title>The Brucella suis genome reveals fundamental similarities between animal and plant pathogens and symbionts.</title>
        <authorList>
            <person name="Paulsen I.T."/>
            <person name="Seshadri R."/>
            <person name="Nelson K.E."/>
            <person name="Eisen J.A."/>
            <person name="Heidelberg J.F."/>
            <person name="Read T.D."/>
            <person name="Dodson R.J."/>
            <person name="Umayam L.A."/>
            <person name="Brinkac L.M."/>
            <person name="Beanan M.J."/>
            <person name="Daugherty S.C."/>
            <person name="DeBoy R.T."/>
            <person name="Durkin A.S."/>
            <person name="Kolonay J.F."/>
            <person name="Madupu R."/>
            <person name="Nelson W.C."/>
            <person name="Ayodeji B."/>
            <person name="Kraul M."/>
            <person name="Shetty J."/>
            <person name="Malek J.A."/>
            <person name="Van Aken S.E."/>
            <person name="Riedmuller S."/>
            <person name="Tettelin H."/>
            <person name="Gill S.R."/>
            <person name="White O."/>
            <person name="Salzberg S.L."/>
            <person name="Hoover D.L."/>
            <person name="Lindler L.E."/>
            <person name="Halling S.M."/>
            <person name="Boyle S.M."/>
            <person name="Fraser C.M."/>
        </authorList>
    </citation>
    <scope>NUCLEOTIDE SEQUENCE [LARGE SCALE GENOMIC DNA]</scope>
    <source>
        <strain>1330</strain>
    </source>
</reference>
<reference key="2">
    <citation type="journal article" date="2011" name="J. Bacteriol.">
        <title>Revised genome sequence of Brucella suis 1330.</title>
        <authorList>
            <person name="Tae H."/>
            <person name="Shallom S."/>
            <person name="Settlage R."/>
            <person name="Preston D."/>
            <person name="Adams L.G."/>
            <person name="Garner H.R."/>
        </authorList>
    </citation>
    <scope>NUCLEOTIDE SEQUENCE [LARGE SCALE GENOMIC DNA]</scope>
    <source>
        <strain>1330</strain>
    </source>
</reference>
<protein>
    <recommendedName>
        <fullName>5-hydroxyisourate hydrolase</fullName>
        <shortName>HIU hydrolase</shortName>
        <shortName>HIUHase</shortName>
        <ecNumber>3.5.2.17</ecNumber>
    </recommendedName>
    <alternativeName>
        <fullName>Transthyretin-like protein BR0508/BS1330_I0509</fullName>
    </alternativeName>
</protein>
<organism>
    <name type="scientific">Brucella suis biovar 1 (strain 1330)</name>
    <dbReference type="NCBI Taxonomy" id="204722"/>
    <lineage>
        <taxon>Bacteria</taxon>
        <taxon>Pseudomonadati</taxon>
        <taxon>Pseudomonadota</taxon>
        <taxon>Alphaproteobacteria</taxon>
        <taxon>Hyphomicrobiales</taxon>
        <taxon>Brucellaceae</taxon>
        <taxon>Brucella/Ochrobactrum group</taxon>
        <taxon>Brucella</taxon>
    </lineage>
</organism>
<keyword id="KW-0378">Hydrolase</keyword>
<keyword id="KW-0659">Purine metabolism</keyword>
<accession>Q8G228</accession>
<accession>G0K756</accession>
<sequence>MGKLSTHVLDTAHGTPAAAMRVELYRIAASGTPELLKRVVTNLDGRTDAPLLSGDKMRTGIYELQFHVAEYFEGRGAELAHEPFLDLIPIRFGIADEDGNYHVPLLVSPWSYSTYRGS</sequence>
<gene>
    <name type="ordered locus">BR0508</name>
    <name type="ordered locus">BS1330_I0509</name>
</gene>
<comment type="function">
    <text evidence="1">Catalyzes the hydrolysis of 5-hydroxyisourate (HIU) to 2-oxo-4-hydroxy-4-carboxy-5-ureidoimidazoline (OHCU).</text>
</comment>
<comment type="catalytic activity">
    <reaction>
        <text>5-hydroxyisourate + H2O = 5-hydroxy-2-oxo-4-ureido-2,5-dihydro-1H-imidazole-5-carboxylate + H(+)</text>
        <dbReference type="Rhea" id="RHEA:23736"/>
        <dbReference type="ChEBI" id="CHEBI:15377"/>
        <dbReference type="ChEBI" id="CHEBI:15378"/>
        <dbReference type="ChEBI" id="CHEBI:18072"/>
        <dbReference type="ChEBI" id="CHEBI:58639"/>
        <dbReference type="EC" id="3.5.2.17"/>
    </reaction>
</comment>
<comment type="subunit">
    <text evidence="1">Homotetramer.</text>
</comment>
<comment type="miscellaneous">
    <text>HIU hydrolysis also occurs spontaneously, but more slowly.</text>
</comment>
<comment type="similarity">
    <text evidence="2">Belongs to the transthyretin family. 5-hydroxyisourate hydrolase subfamily.</text>
</comment>
<dbReference type="EC" id="3.5.2.17"/>
<dbReference type="EMBL" id="AE014291">
    <property type="protein sequence ID" value="AAN29450.1"/>
    <property type="molecule type" value="Genomic_DNA"/>
</dbReference>
<dbReference type="EMBL" id="CP002997">
    <property type="protein sequence ID" value="AEM17863.1"/>
    <property type="molecule type" value="Genomic_DNA"/>
</dbReference>
<dbReference type="SMR" id="Q8G228"/>
<dbReference type="KEGG" id="bms:BR0508"/>
<dbReference type="KEGG" id="bsi:BS1330_I0509"/>
<dbReference type="PATRIC" id="fig|204722.21.peg.3384"/>
<dbReference type="HOGENOM" id="CLU_115536_1_1_5"/>
<dbReference type="PhylomeDB" id="Q8G228"/>
<dbReference type="Proteomes" id="UP000007104">
    <property type="component" value="Chromosome I"/>
</dbReference>
<dbReference type="GO" id="GO:0033971">
    <property type="term" value="F:hydroxyisourate hydrolase activity"/>
    <property type="evidence" value="ECO:0007669"/>
    <property type="project" value="UniProtKB-EC"/>
</dbReference>
<dbReference type="GO" id="GO:0006144">
    <property type="term" value="P:purine nucleobase metabolic process"/>
    <property type="evidence" value="ECO:0007669"/>
    <property type="project" value="UniProtKB-KW"/>
</dbReference>
<dbReference type="CDD" id="cd05822">
    <property type="entry name" value="TLP_HIUase"/>
    <property type="match status" value="1"/>
</dbReference>
<dbReference type="FunFam" id="2.60.40.180:FF:000005">
    <property type="entry name" value="5-hydroxyisourate hydrolase"/>
    <property type="match status" value="1"/>
</dbReference>
<dbReference type="Gene3D" id="2.60.40.180">
    <property type="entry name" value="Transthyretin/hydroxyisourate hydrolase domain"/>
    <property type="match status" value="1"/>
</dbReference>
<dbReference type="InterPro" id="IPR014306">
    <property type="entry name" value="Hydroxyisourate_hydrolase"/>
</dbReference>
<dbReference type="InterPro" id="IPR023418">
    <property type="entry name" value="Thyroxine_BS"/>
</dbReference>
<dbReference type="InterPro" id="IPR000895">
    <property type="entry name" value="Transthyretin/HIU_hydrolase"/>
</dbReference>
<dbReference type="InterPro" id="IPR023416">
    <property type="entry name" value="Transthyretin/HIU_hydrolase_d"/>
</dbReference>
<dbReference type="InterPro" id="IPR036817">
    <property type="entry name" value="Transthyretin/HIU_hydrolase_sf"/>
</dbReference>
<dbReference type="InterPro" id="IPR023419">
    <property type="entry name" value="Transthyretin_CS"/>
</dbReference>
<dbReference type="NCBIfam" id="TIGR02962">
    <property type="entry name" value="hdxy_isourate"/>
    <property type="match status" value="1"/>
</dbReference>
<dbReference type="PANTHER" id="PTHR10395:SF7">
    <property type="entry name" value="5-HYDROXYISOURATE HYDROLASE"/>
    <property type="match status" value="1"/>
</dbReference>
<dbReference type="PANTHER" id="PTHR10395">
    <property type="entry name" value="URICASE AND TRANSTHYRETIN-RELATED"/>
    <property type="match status" value="1"/>
</dbReference>
<dbReference type="Pfam" id="PF00576">
    <property type="entry name" value="Transthyretin"/>
    <property type="match status" value="1"/>
</dbReference>
<dbReference type="PRINTS" id="PR00189">
    <property type="entry name" value="TRNSTHYRETIN"/>
</dbReference>
<dbReference type="SUPFAM" id="SSF49472">
    <property type="entry name" value="Transthyretin (synonym: prealbumin)"/>
    <property type="match status" value="1"/>
</dbReference>
<dbReference type="PROSITE" id="PS00768">
    <property type="entry name" value="TRANSTHYRETIN_1"/>
    <property type="match status" value="1"/>
</dbReference>
<dbReference type="PROSITE" id="PS00769">
    <property type="entry name" value="TRANSTHYRETIN_2"/>
    <property type="match status" value="1"/>
</dbReference>
<name>HIUH_BRUSU</name>